<sequence length="405" mass="44691">MEQIKLDSIADAIEAIRKGEVIIVVDDEDRENEGDFICAAECVTPEIINFMSKEGRGLICAPISEARCTELKLDLMVGSNTATHETPFTVSVDLLGNGCTTGISASDRSKTIRALVDPDTKPEDLGRPGHIFPLKAKDEGVLRRVGHTEAAVDLARLAGFKPAGVLIEIMSEDGSMARLPELKQIATKFNLKLISIKDLIEYRLTHESLVKREIGVDMPTNLGDFDLIAFRQISTGEVHLALIKGTWEKDEPVMVRVHSSCVTGDIFGSCRCDCGPQLHKAMEMIQQEGKGVILYMNQEGRGIGLLNKLKAYKLQEQGRDTVEANLELGFKMDQRDYGTGAQILRDLNISKLRLITNNPVKRAALAGYGLEITEAVPIEIPSNPHNLEYLKTKRDKMGHTILKKD</sequence>
<organism>
    <name type="scientific">Cytophaga hutchinsonii (strain ATCC 33406 / DSM 1761 / CIP 103989 / NBRC 15051 / NCIMB 9469 / D465)</name>
    <dbReference type="NCBI Taxonomy" id="269798"/>
    <lineage>
        <taxon>Bacteria</taxon>
        <taxon>Pseudomonadati</taxon>
        <taxon>Bacteroidota</taxon>
        <taxon>Cytophagia</taxon>
        <taxon>Cytophagales</taxon>
        <taxon>Cytophagaceae</taxon>
        <taxon>Cytophaga</taxon>
    </lineage>
</organism>
<feature type="chain" id="PRO_1000165251" description="Riboflavin biosynthesis protein RibBA">
    <location>
        <begin position="1"/>
        <end position="405"/>
    </location>
</feature>
<feature type="region of interest" description="DHBP synthase">
    <location>
        <begin position="1"/>
        <end position="205"/>
    </location>
</feature>
<feature type="region of interest" description="GTP cyclohydrolase II">
    <location>
        <begin position="206"/>
        <end position="405"/>
    </location>
</feature>
<feature type="active site" description="Proton acceptor; for GTP cyclohydrolase activity" evidence="1">
    <location>
        <position position="333"/>
    </location>
</feature>
<feature type="active site" description="Nucleophile; for GTP cyclohydrolase activity" evidence="1">
    <location>
        <position position="335"/>
    </location>
</feature>
<feature type="binding site" evidence="1">
    <location>
        <begin position="30"/>
        <end position="31"/>
    </location>
    <ligand>
        <name>D-ribulose 5-phosphate</name>
        <dbReference type="ChEBI" id="CHEBI:58121"/>
    </ligand>
</feature>
<feature type="binding site" evidence="1">
    <location>
        <position position="31"/>
    </location>
    <ligand>
        <name>Mg(2+)</name>
        <dbReference type="ChEBI" id="CHEBI:18420"/>
        <label>1</label>
    </ligand>
</feature>
<feature type="binding site" evidence="1">
    <location>
        <position position="31"/>
    </location>
    <ligand>
        <name>Mg(2+)</name>
        <dbReference type="ChEBI" id="CHEBI:18420"/>
        <label>2</label>
    </ligand>
</feature>
<feature type="binding site" evidence="1">
    <location>
        <position position="35"/>
    </location>
    <ligand>
        <name>D-ribulose 5-phosphate</name>
        <dbReference type="ChEBI" id="CHEBI:58121"/>
    </ligand>
</feature>
<feature type="binding site" evidence="1">
    <location>
        <begin position="144"/>
        <end position="148"/>
    </location>
    <ligand>
        <name>D-ribulose 5-phosphate</name>
        <dbReference type="ChEBI" id="CHEBI:58121"/>
    </ligand>
</feature>
<feature type="binding site" evidence="1">
    <location>
        <position position="147"/>
    </location>
    <ligand>
        <name>Mg(2+)</name>
        <dbReference type="ChEBI" id="CHEBI:18420"/>
        <label>2</label>
    </ligand>
</feature>
<feature type="binding site" evidence="1">
    <location>
        <position position="168"/>
    </location>
    <ligand>
        <name>D-ribulose 5-phosphate</name>
        <dbReference type="ChEBI" id="CHEBI:58121"/>
    </ligand>
</feature>
<feature type="binding site" evidence="1">
    <location>
        <begin position="256"/>
        <end position="260"/>
    </location>
    <ligand>
        <name>GTP</name>
        <dbReference type="ChEBI" id="CHEBI:37565"/>
    </ligand>
</feature>
<feature type="binding site" evidence="1">
    <location>
        <position position="261"/>
    </location>
    <ligand>
        <name>Zn(2+)</name>
        <dbReference type="ChEBI" id="CHEBI:29105"/>
        <note>catalytic</note>
    </ligand>
</feature>
<feature type="binding site" evidence="1">
    <location>
        <position position="272"/>
    </location>
    <ligand>
        <name>Zn(2+)</name>
        <dbReference type="ChEBI" id="CHEBI:29105"/>
        <note>catalytic</note>
    </ligand>
</feature>
<feature type="binding site" evidence="1">
    <location>
        <position position="274"/>
    </location>
    <ligand>
        <name>Zn(2+)</name>
        <dbReference type="ChEBI" id="CHEBI:29105"/>
        <note>catalytic</note>
    </ligand>
</feature>
<feature type="binding site" evidence="1">
    <location>
        <position position="277"/>
    </location>
    <ligand>
        <name>GTP</name>
        <dbReference type="ChEBI" id="CHEBI:37565"/>
    </ligand>
</feature>
<feature type="binding site" evidence="1">
    <location>
        <begin position="299"/>
        <end position="301"/>
    </location>
    <ligand>
        <name>GTP</name>
        <dbReference type="ChEBI" id="CHEBI:37565"/>
    </ligand>
</feature>
<feature type="binding site" evidence="1">
    <location>
        <position position="321"/>
    </location>
    <ligand>
        <name>GTP</name>
        <dbReference type="ChEBI" id="CHEBI:37565"/>
    </ligand>
</feature>
<feature type="binding site" evidence="1">
    <location>
        <position position="356"/>
    </location>
    <ligand>
        <name>GTP</name>
        <dbReference type="ChEBI" id="CHEBI:37565"/>
    </ligand>
</feature>
<feature type="binding site" evidence="1">
    <location>
        <position position="361"/>
    </location>
    <ligand>
        <name>GTP</name>
        <dbReference type="ChEBI" id="CHEBI:37565"/>
    </ligand>
</feature>
<feature type="site" description="Essential for DHBP synthase activity" evidence="1">
    <location>
        <position position="130"/>
    </location>
</feature>
<feature type="site" description="Essential for DHBP synthase activity" evidence="1">
    <location>
        <position position="168"/>
    </location>
</feature>
<comment type="function">
    <text evidence="1">Catalyzes the conversion of D-ribulose 5-phosphate to formate and 3,4-dihydroxy-2-butanone 4-phosphate.</text>
</comment>
<comment type="function">
    <text evidence="1">Catalyzes the conversion of GTP to 2,5-diamino-6-ribosylamino-4(3H)-pyrimidinone 5'-phosphate (DARP), formate and pyrophosphate.</text>
</comment>
<comment type="catalytic activity">
    <reaction evidence="1">
        <text>D-ribulose 5-phosphate = (2S)-2-hydroxy-3-oxobutyl phosphate + formate + H(+)</text>
        <dbReference type="Rhea" id="RHEA:18457"/>
        <dbReference type="ChEBI" id="CHEBI:15378"/>
        <dbReference type="ChEBI" id="CHEBI:15740"/>
        <dbReference type="ChEBI" id="CHEBI:58121"/>
        <dbReference type="ChEBI" id="CHEBI:58830"/>
        <dbReference type="EC" id="4.1.99.12"/>
    </reaction>
</comment>
<comment type="catalytic activity">
    <reaction evidence="1">
        <text>GTP + 4 H2O = 2,5-diamino-6-hydroxy-4-(5-phosphoribosylamino)-pyrimidine + formate + 2 phosphate + 3 H(+)</text>
        <dbReference type="Rhea" id="RHEA:23704"/>
        <dbReference type="ChEBI" id="CHEBI:15377"/>
        <dbReference type="ChEBI" id="CHEBI:15378"/>
        <dbReference type="ChEBI" id="CHEBI:15740"/>
        <dbReference type="ChEBI" id="CHEBI:37565"/>
        <dbReference type="ChEBI" id="CHEBI:43474"/>
        <dbReference type="ChEBI" id="CHEBI:58614"/>
        <dbReference type="EC" id="3.5.4.25"/>
    </reaction>
</comment>
<comment type="cofactor">
    <cofactor evidence="1">
        <name>Mg(2+)</name>
        <dbReference type="ChEBI" id="CHEBI:18420"/>
    </cofactor>
    <cofactor evidence="1">
        <name>Mn(2+)</name>
        <dbReference type="ChEBI" id="CHEBI:29035"/>
    </cofactor>
    <text evidence="1">Binds 2 divalent metal cations per subunit. Magnesium or manganese.</text>
</comment>
<comment type="cofactor">
    <cofactor evidence="1">
        <name>Zn(2+)</name>
        <dbReference type="ChEBI" id="CHEBI:29105"/>
    </cofactor>
    <text evidence="1">Binds 1 zinc ion per subunit.</text>
</comment>
<comment type="pathway">
    <text evidence="1">Cofactor biosynthesis; riboflavin biosynthesis; 2-hydroxy-3-oxobutyl phosphate from D-ribulose 5-phosphate: step 1/1.</text>
</comment>
<comment type="pathway">
    <text evidence="1">Cofactor biosynthesis; riboflavin biosynthesis; 5-amino-6-(D-ribitylamino)uracil from GTP: step 1/4.</text>
</comment>
<comment type="similarity">
    <text evidence="1">In the N-terminal section; belongs to the DHBP synthase family.</text>
</comment>
<comment type="similarity">
    <text evidence="1">In the C-terminal section; belongs to the GTP cyclohydrolase II family.</text>
</comment>
<keyword id="KW-0342">GTP-binding</keyword>
<keyword id="KW-0378">Hydrolase</keyword>
<keyword id="KW-0456">Lyase</keyword>
<keyword id="KW-0460">Magnesium</keyword>
<keyword id="KW-0464">Manganese</keyword>
<keyword id="KW-0479">Metal-binding</keyword>
<keyword id="KW-0511">Multifunctional enzyme</keyword>
<keyword id="KW-0547">Nucleotide-binding</keyword>
<keyword id="KW-1185">Reference proteome</keyword>
<keyword id="KW-0686">Riboflavin biosynthesis</keyword>
<keyword id="KW-0862">Zinc</keyword>
<gene>
    <name evidence="1" type="primary">ribBA</name>
    <name type="ordered locus">CHU_0931</name>
</gene>
<dbReference type="EC" id="4.1.99.12" evidence="1"/>
<dbReference type="EC" id="3.5.4.25" evidence="1"/>
<dbReference type="EMBL" id="CP000383">
    <property type="protein sequence ID" value="ABG58210.1"/>
    <property type="molecule type" value="Genomic_DNA"/>
</dbReference>
<dbReference type="RefSeq" id="WP_011584325.1">
    <property type="nucleotide sequence ID" value="NC_008255.1"/>
</dbReference>
<dbReference type="SMR" id="Q11WK6"/>
<dbReference type="STRING" id="269798.CHU_0931"/>
<dbReference type="DNASU" id="4184119"/>
<dbReference type="KEGG" id="chu:CHU_0931"/>
<dbReference type="eggNOG" id="COG0108">
    <property type="taxonomic scope" value="Bacteria"/>
</dbReference>
<dbReference type="eggNOG" id="COG0807">
    <property type="taxonomic scope" value="Bacteria"/>
</dbReference>
<dbReference type="HOGENOM" id="CLU_020273_1_2_10"/>
<dbReference type="OrthoDB" id="9793111at2"/>
<dbReference type="UniPathway" id="UPA00275">
    <property type="reaction ID" value="UER00399"/>
</dbReference>
<dbReference type="UniPathway" id="UPA00275">
    <property type="reaction ID" value="UER00400"/>
</dbReference>
<dbReference type="Proteomes" id="UP000001822">
    <property type="component" value="Chromosome"/>
</dbReference>
<dbReference type="GO" id="GO:0005829">
    <property type="term" value="C:cytosol"/>
    <property type="evidence" value="ECO:0007669"/>
    <property type="project" value="TreeGrafter"/>
</dbReference>
<dbReference type="GO" id="GO:0008686">
    <property type="term" value="F:3,4-dihydroxy-2-butanone-4-phosphate synthase activity"/>
    <property type="evidence" value="ECO:0007669"/>
    <property type="project" value="UniProtKB-UniRule"/>
</dbReference>
<dbReference type="GO" id="GO:0005525">
    <property type="term" value="F:GTP binding"/>
    <property type="evidence" value="ECO:0007669"/>
    <property type="project" value="UniProtKB-KW"/>
</dbReference>
<dbReference type="GO" id="GO:0003935">
    <property type="term" value="F:GTP cyclohydrolase II activity"/>
    <property type="evidence" value="ECO:0007669"/>
    <property type="project" value="UniProtKB-UniRule"/>
</dbReference>
<dbReference type="GO" id="GO:0000287">
    <property type="term" value="F:magnesium ion binding"/>
    <property type="evidence" value="ECO:0007669"/>
    <property type="project" value="UniProtKB-UniRule"/>
</dbReference>
<dbReference type="GO" id="GO:0030145">
    <property type="term" value="F:manganese ion binding"/>
    <property type="evidence" value="ECO:0007669"/>
    <property type="project" value="UniProtKB-UniRule"/>
</dbReference>
<dbReference type="GO" id="GO:0008270">
    <property type="term" value="F:zinc ion binding"/>
    <property type="evidence" value="ECO:0007669"/>
    <property type="project" value="UniProtKB-UniRule"/>
</dbReference>
<dbReference type="GO" id="GO:0009231">
    <property type="term" value="P:riboflavin biosynthetic process"/>
    <property type="evidence" value="ECO:0007669"/>
    <property type="project" value="UniProtKB-UniRule"/>
</dbReference>
<dbReference type="CDD" id="cd00641">
    <property type="entry name" value="GTP_cyclohydro2"/>
    <property type="match status" value="1"/>
</dbReference>
<dbReference type="FunFam" id="3.40.50.10990:FF:000001">
    <property type="entry name" value="Riboflavin biosynthesis protein RibBA"/>
    <property type="match status" value="1"/>
</dbReference>
<dbReference type="FunFam" id="3.90.870.10:FF:000001">
    <property type="entry name" value="Riboflavin biosynthesis protein RibBA"/>
    <property type="match status" value="1"/>
</dbReference>
<dbReference type="Gene3D" id="3.90.870.10">
    <property type="entry name" value="DHBP synthase"/>
    <property type="match status" value="1"/>
</dbReference>
<dbReference type="Gene3D" id="3.40.50.10990">
    <property type="entry name" value="GTP cyclohydrolase II"/>
    <property type="match status" value="1"/>
</dbReference>
<dbReference type="HAMAP" id="MF_00179">
    <property type="entry name" value="RibA"/>
    <property type="match status" value="1"/>
</dbReference>
<dbReference type="HAMAP" id="MF_00180">
    <property type="entry name" value="RibB"/>
    <property type="match status" value="1"/>
</dbReference>
<dbReference type="HAMAP" id="MF_01283">
    <property type="entry name" value="RibBA"/>
    <property type="match status" value="1"/>
</dbReference>
<dbReference type="InterPro" id="IPR017945">
    <property type="entry name" value="DHBP_synth_RibB-like_a/b_dom"/>
</dbReference>
<dbReference type="InterPro" id="IPR000422">
    <property type="entry name" value="DHBP_synthase_RibB"/>
</dbReference>
<dbReference type="InterPro" id="IPR032677">
    <property type="entry name" value="GTP_cyclohydro_II"/>
</dbReference>
<dbReference type="InterPro" id="IPR000926">
    <property type="entry name" value="RibA"/>
</dbReference>
<dbReference type="InterPro" id="IPR036144">
    <property type="entry name" value="RibA-like_sf"/>
</dbReference>
<dbReference type="InterPro" id="IPR016299">
    <property type="entry name" value="Riboflavin_synth_RibBA"/>
</dbReference>
<dbReference type="NCBIfam" id="NF001591">
    <property type="entry name" value="PRK00393.1"/>
    <property type="match status" value="1"/>
</dbReference>
<dbReference type="NCBIfam" id="NF006803">
    <property type="entry name" value="PRK09311.1"/>
    <property type="match status" value="1"/>
</dbReference>
<dbReference type="NCBIfam" id="TIGR00505">
    <property type="entry name" value="ribA"/>
    <property type="match status" value="1"/>
</dbReference>
<dbReference type="NCBIfam" id="TIGR00506">
    <property type="entry name" value="ribB"/>
    <property type="match status" value="1"/>
</dbReference>
<dbReference type="PANTHER" id="PTHR21327:SF18">
    <property type="entry name" value="3,4-DIHYDROXY-2-BUTANONE 4-PHOSPHATE SYNTHASE"/>
    <property type="match status" value="1"/>
</dbReference>
<dbReference type="PANTHER" id="PTHR21327">
    <property type="entry name" value="GTP CYCLOHYDROLASE II-RELATED"/>
    <property type="match status" value="1"/>
</dbReference>
<dbReference type="Pfam" id="PF00926">
    <property type="entry name" value="DHBP_synthase"/>
    <property type="match status" value="1"/>
</dbReference>
<dbReference type="Pfam" id="PF00925">
    <property type="entry name" value="GTP_cyclohydro2"/>
    <property type="match status" value="1"/>
</dbReference>
<dbReference type="PIRSF" id="PIRSF001259">
    <property type="entry name" value="RibA"/>
    <property type="match status" value="1"/>
</dbReference>
<dbReference type="SUPFAM" id="SSF142695">
    <property type="entry name" value="RibA-like"/>
    <property type="match status" value="1"/>
</dbReference>
<dbReference type="SUPFAM" id="SSF55821">
    <property type="entry name" value="YrdC/RibB"/>
    <property type="match status" value="1"/>
</dbReference>
<protein>
    <recommendedName>
        <fullName evidence="1">Riboflavin biosynthesis protein RibBA</fullName>
    </recommendedName>
    <domain>
        <recommendedName>
            <fullName evidence="1">3,4-dihydroxy-2-butanone 4-phosphate synthase</fullName>
            <shortName evidence="1">DHBP synthase</shortName>
            <ecNumber evidence="1">4.1.99.12</ecNumber>
        </recommendedName>
    </domain>
    <domain>
        <recommendedName>
            <fullName evidence="1">GTP cyclohydrolase-2</fullName>
            <ecNumber evidence="1">3.5.4.25</ecNumber>
        </recommendedName>
        <alternativeName>
            <fullName evidence="1">GTP cyclohydrolase II</fullName>
        </alternativeName>
    </domain>
</protein>
<reference key="1">
    <citation type="journal article" date="2007" name="Appl. Environ. Microbiol.">
        <title>Genome sequence of the cellulolytic gliding bacterium Cytophaga hutchinsonii.</title>
        <authorList>
            <person name="Xie G."/>
            <person name="Bruce D.C."/>
            <person name="Challacombe J.F."/>
            <person name="Chertkov O."/>
            <person name="Detter J.C."/>
            <person name="Gilna P."/>
            <person name="Han C.S."/>
            <person name="Lucas S."/>
            <person name="Misra M."/>
            <person name="Myers G.L."/>
            <person name="Richardson P."/>
            <person name="Tapia R."/>
            <person name="Thayer N."/>
            <person name="Thompson L.S."/>
            <person name="Brettin T.S."/>
            <person name="Henrissat B."/>
            <person name="Wilson D.B."/>
            <person name="McBride M.J."/>
        </authorList>
    </citation>
    <scope>NUCLEOTIDE SEQUENCE [LARGE SCALE GENOMIC DNA]</scope>
    <source>
        <strain>ATCC 33406 / DSM 1761 / JCM 20678 / CIP 103989 / IAM 12607 / NBRC 15051 / NCIMB 9469 / D465</strain>
    </source>
</reference>
<accession>Q11WK6</accession>
<proteinExistence type="inferred from homology"/>
<name>RIBBA_CYTH3</name>
<evidence type="ECO:0000255" key="1">
    <source>
        <dbReference type="HAMAP-Rule" id="MF_01283"/>
    </source>
</evidence>